<organism>
    <name type="scientific">Borreliella afzelii (strain PKo)</name>
    <name type="common">Borrelia afzelii</name>
    <dbReference type="NCBI Taxonomy" id="390236"/>
    <lineage>
        <taxon>Bacteria</taxon>
        <taxon>Pseudomonadati</taxon>
        <taxon>Spirochaetota</taxon>
        <taxon>Spirochaetia</taxon>
        <taxon>Spirochaetales</taxon>
        <taxon>Borreliaceae</taxon>
        <taxon>Borreliella</taxon>
    </lineage>
</organism>
<reference key="1">
    <citation type="journal article" date="2006" name="BMC Genomics">
        <title>Comparative genome analysis: selection pressure on the Borrelia vls cassettes is essential for infectivity.</title>
        <authorList>
            <person name="Gloeckner G."/>
            <person name="Schulte-Spechtel U."/>
            <person name="Schilhabel M."/>
            <person name="Felder M."/>
            <person name="Suehnel J."/>
            <person name="Wilske B."/>
            <person name="Platzer M."/>
        </authorList>
    </citation>
    <scope>NUCLEOTIDE SEQUENCE [LARGE SCALE GENOMIC DNA]</scope>
    <source>
        <strain>PKo</strain>
    </source>
</reference>
<reference key="2">
    <citation type="journal article" date="2011" name="J. Bacteriol.">
        <title>Whole-genome sequences of two Borrelia afzelii and two Borrelia garinii Lyme disease agent isolates.</title>
        <authorList>
            <person name="Casjens S.R."/>
            <person name="Mongodin E.F."/>
            <person name="Qiu W.G."/>
            <person name="Dunn J.J."/>
            <person name="Luft B.J."/>
            <person name="Fraser-Liggett C.M."/>
            <person name="Schutzer S.E."/>
        </authorList>
    </citation>
    <scope>NUCLEOTIDE SEQUENCE [LARGE SCALE GENOMIC DNA]</scope>
    <source>
        <strain>PKo</strain>
    </source>
</reference>
<sequence length="150" mass="17810">MNTNTLLIENKKAKFNYFIEEKISCGIVLKGTEVKSIKAKKLSFNNSFAIIKKEELWLENLHVSKYKEGNIFNHDELRPRKLLIKKKELQRLKKFKEKEGYTLIPISFYLKKSIIKVEVGICKGKKLYDKREILKQKSIKKDLSREIKYK</sequence>
<dbReference type="EMBL" id="CP000395">
    <property type="protein sequence ID" value="ABH01297.1"/>
    <property type="molecule type" value="Genomic_DNA"/>
</dbReference>
<dbReference type="EMBL" id="CP002933">
    <property type="protein sequence ID" value="AEL69267.1"/>
    <property type="molecule type" value="Genomic_DNA"/>
</dbReference>
<dbReference type="RefSeq" id="WP_004790217.1">
    <property type="nucleotide sequence ID" value="NZ_CP160066.1"/>
</dbReference>
<dbReference type="SMR" id="Q0SPD1"/>
<dbReference type="STRING" id="29518.BLA32_04115"/>
<dbReference type="GeneID" id="76831575"/>
<dbReference type="KEGG" id="baf:BAPKO_0032"/>
<dbReference type="KEGG" id="bafz:BafPKo_0033"/>
<dbReference type="PATRIC" id="fig|390236.22.peg.33"/>
<dbReference type="eggNOG" id="COG0691">
    <property type="taxonomic scope" value="Bacteria"/>
</dbReference>
<dbReference type="HOGENOM" id="CLU_108953_0_0_12"/>
<dbReference type="OrthoDB" id="9805462at2"/>
<dbReference type="Proteomes" id="UP000005216">
    <property type="component" value="Chromosome"/>
</dbReference>
<dbReference type="GO" id="GO:0005829">
    <property type="term" value="C:cytosol"/>
    <property type="evidence" value="ECO:0007669"/>
    <property type="project" value="TreeGrafter"/>
</dbReference>
<dbReference type="GO" id="GO:0003723">
    <property type="term" value="F:RNA binding"/>
    <property type="evidence" value="ECO:0007669"/>
    <property type="project" value="UniProtKB-UniRule"/>
</dbReference>
<dbReference type="GO" id="GO:0070929">
    <property type="term" value="P:trans-translation"/>
    <property type="evidence" value="ECO:0007669"/>
    <property type="project" value="UniProtKB-UniRule"/>
</dbReference>
<dbReference type="CDD" id="cd09294">
    <property type="entry name" value="SmpB"/>
    <property type="match status" value="1"/>
</dbReference>
<dbReference type="Gene3D" id="2.40.280.10">
    <property type="match status" value="1"/>
</dbReference>
<dbReference type="HAMAP" id="MF_00023">
    <property type="entry name" value="SmpB"/>
    <property type="match status" value="1"/>
</dbReference>
<dbReference type="InterPro" id="IPR023620">
    <property type="entry name" value="SmpB"/>
</dbReference>
<dbReference type="InterPro" id="IPR000037">
    <property type="entry name" value="SsrA-bd_prot"/>
</dbReference>
<dbReference type="InterPro" id="IPR020081">
    <property type="entry name" value="SsrA-bd_prot_CS"/>
</dbReference>
<dbReference type="NCBIfam" id="NF003843">
    <property type="entry name" value="PRK05422.1"/>
    <property type="match status" value="1"/>
</dbReference>
<dbReference type="NCBIfam" id="TIGR00086">
    <property type="entry name" value="smpB"/>
    <property type="match status" value="1"/>
</dbReference>
<dbReference type="PANTHER" id="PTHR30308:SF2">
    <property type="entry name" value="SSRA-BINDING PROTEIN"/>
    <property type="match status" value="1"/>
</dbReference>
<dbReference type="PANTHER" id="PTHR30308">
    <property type="entry name" value="TMRNA-BINDING COMPONENT OF TRANS-TRANSLATION TAGGING COMPLEX"/>
    <property type="match status" value="1"/>
</dbReference>
<dbReference type="Pfam" id="PF01668">
    <property type="entry name" value="SmpB"/>
    <property type="match status" value="1"/>
</dbReference>
<dbReference type="SUPFAM" id="SSF74982">
    <property type="entry name" value="Small protein B (SmpB)"/>
    <property type="match status" value="1"/>
</dbReference>
<dbReference type="PROSITE" id="PS01317">
    <property type="entry name" value="SSRP"/>
    <property type="match status" value="1"/>
</dbReference>
<comment type="function">
    <text evidence="1">Required for rescue of stalled ribosomes mediated by trans-translation. Binds to transfer-messenger RNA (tmRNA), required for stable association of tmRNA with ribosomes. tmRNA and SmpB together mimic tRNA shape, replacing the anticodon stem-loop with SmpB. tmRNA is encoded by the ssrA gene; the 2 termini fold to resemble tRNA(Ala) and it encodes a 'tag peptide', a short internal open reading frame. During trans-translation Ala-aminoacylated tmRNA acts like a tRNA, entering the A-site of stalled ribosomes, displacing the stalled mRNA. The ribosome then switches to translate the ORF on the tmRNA; the nascent peptide is terminated with the 'tag peptide' encoded by the tmRNA and targeted for degradation. The ribosome is freed to recommence translation, which seems to be the essential function of trans-translation.</text>
</comment>
<comment type="subcellular location">
    <subcellularLocation>
        <location evidence="1">Cytoplasm</location>
    </subcellularLocation>
    <text evidence="1">The tmRNA-SmpB complex associates with stalled 70S ribosomes.</text>
</comment>
<comment type="similarity">
    <text evidence="1">Belongs to the SmpB family.</text>
</comment>
<name>SSRP_BORAP</name>
<gene>
    <name evidence="1" type="primary">smpB</name>
    <name type="ordered locus">BAPKO_0032</name>
    <name type="ordered locus">BafPKo_0033</name>
</gene>
<proteinExistence type="inferred from homology"/>
<protein>
    <recommendedName>
        <fullName evidence="1">SsrA-binding protein</fullName>
    </recommendedName>
    <alternativeName>
        <fullName evidence="1">Small protein B</fullName>
    </alternativeName>
</protein>
<feature type="chain" id="PRO_1000002004" description="SsrA-binding protein">
    <location>
        <begin position="1"/>
        <end position="150"/>
    </location>
</feature>
<evidence type="ECO:0000255" key="1">
    <source>
        <dbReference type="HAMAP-Rule" id="MF_00023"/>
    </source>
</evidence>
<keyword id="KW-0963">Cytoplasm</keyword>
<keyword id="KW-0694">RNA-binding</keyword>
<accession>Q0SPD1</accession>
<accession>G0IQ63</accession>